<organism>
    <name type="scientific">Cytisophyllum sessilifolium</name>
    <name type="common">Sessile-leaved cytisus</name>
    <name type="synonym">Cytisus sessilifolium</name>
    <dbReference type="NCBI Taxonomy" id="3834"/>
    <lineage>
        <taxon>Eukaryota</taxon>
        <taxon>Viridiplantae</taxon>
        <taxon>Streptophyta</taxon>
        <taxon>Embryophyta</taxon>
        <taxon>Tracheophyta</taxon>
        <taxon>Spermatophyta</taxon>
        <taxon>Magnoliopsida</taxon>
        <taxon>eudicotyledons</taxon>
        <taxon>Gunneridae</taxon>
        <taxon>Pentapetalae</taxon>
        <taxon>rosids</taxon>
        <taxon>fabids</taxon>
        <taxon>Fabales</taxon>
        <taxon>Fabaceae</taxon>
        <taxon>Papilionoideae</taxon>
        <taxon>50 kb inversion clade</taxon>
        <taxon>genistoids sensu lato</taxon>
        <taxon>core genistoids</taxon>
        <taxon>Genisteae</taxon>
        <taxon>Cytisophyllum</taxon>
    </lineage>
</organism>
<evidence type="ECO:0000250" key="1"/>
<evidence type="ECO:0000255" key="2"/>
<evidence type="ECO:0000305" key="3"/>
<dbReference type="PIR" id="S23099">
    <property type="entry name" value="S23099"/>
</dbReference>
<dbReference type="SMR" id="P22970"/>
<dbReference type="GO" id="GO:0030246">
    <property type="term" value="F:carbohydrate binding"/>
    <property type="evidence" value="ECO:0007669"/>
    <property type="project" value="UniProtKB-KW"/>
</dbReference>
<dbReference type="GO" id="GO:0046872">
    <property type="term" value="F:metal ion binding"/>
    <property type="evidence" value="ECO:0007669"/>
    <property type="project" value="UniProtKB-KW"/>
</dbReference>
<dbReference type="CDD" id="cd06899">
    <property type="entry name" value="lectin_legume_LecRK_Arcelin_ConA"/>
    <property type="match status" value="1"/>
</dbReference>
<dbReference type="Gene3D" id="2.60.120.200">
    <property type="match status" value="1"/>
</dbReference>
<dbReference type="InterPro" id="IPR013320">
    <property type="entry name" value="ConA-like_dom_sf"/>
</dbReference>
<dbReference type="InterPro" id="IPR016363">
    <property type="entry name" value="L-lectin"/>
</dbReference>
<dbReference type="InterPro" id="IPR000985">
    <property type="entry name" value="Lectin_LegA_CS"/>
</dbReference>
<dbReference type="InterPro" id="IPR019825">
    <property type="entry name" value="Lectin_legB_Mn/Ca_BS"/>
</dbReference>
<dbReference type="InterPro" id="IPR001220">
    <property type="entry name" value="Legume_lectin_dom"/>
</dbReference>
<dbReference type="InterPro" id="IPR050258">
    <property type="entry name" value="Leguminous_Lectin"/>
</dbReference>
<dbReference type="PANTHER" id="PTHR32401">
    <property type="entry name" value="CONCANAVALIN A-LIKE LECTIN FAMILY PROTEIN"/>
    <property type="match status" value="1"/>
</dbReference>
<dbReference type="PANTHER" id="PTHR32401:SF45">
    <property type="entry name" value="LECTIN"/>
    <property type="match status" value="1"/>
</dbReference>
<dbReference type="Pfam" id="PF00139">
    <property type="entry name" value="Lectin_legB"/>
    <property type="match status" value="1"/>
</dbReference>
<dbReference type="PIRSF" id="PIRSF002690">
    <property type="entry name" value="L-type_lectin_plant"/>
    <property type="match status" value="1"/>
</dbReference>
<dbReference type="SUPFAM" id="SSF49899">
    <property type="entry name" value="Concanavalin A-like lectins/glucanases"/>
    <property type="match status" value="1"/>
</dbReference>
<dbReference type="PROSITE" id="PS00308">
    <property type="entry name" value="LECTIN_LEGUME_ALPHA"/>
    <property type="match status" value="1"/>
</dbReference>
<dbReference type="PROSITE" id="PS00307">
    <property type="entry name" value="LECTIN_LEGUME_BETA"/>
    <property type="match status" value="1"/>
</dbReference>
<keyword id="KW-0106">Calcium</keyword>
<keyword id="KW-0903">Direct protein sequencing</keyword>
<keyword id="KW-0325">Glycoprotein</keyword>
<keyword id="KW-0430">Lectin</keyword>
<keyword id="KW-0464">Manganese</keyword>
<keyword id="KW-0479">Metal-binding</keyword>
<reference key="1">
    <citation type="journal article" date="1992" name="FEBS Lett.">
        <title>Correlation between carbohydrate-binding specificity and amino acid sequence of carbohydrate-binding regions of Cytisus-type anti-H(O) lectins.</title>
        <authorList>
            <person name="Konami Y."/>
            <person name="Yamamoto K."/>
            <person name="Osawa T."/>
            <person name="Irimura T."/>
        </authorList>
    </citation>
    <scope>PROTEIN SEQUENCE</scope>
    <source>
        <tissue>Seed</tissue>
    </source>
</reference>
<reference key="2">
    <citation type="journal article" date="1991" name="Biol. Chem. Hoppe-Seyler">
        <title>Purification and characterization of two types of Cytisus sessilifolius anti-H(O) lectins by affinity chromatography.</title>
        <authorList>
            <person name="Konami Y."/>
            <person name="Yamamoto K."/>
            <person name="Osawa T."/>
        </authorList>
    </citation>
    <scope>PROTEIN SEQUENCE OF 1-35</scope>
    <source>
        <tissue>Seed</tissue>
    </source>
</reference>
<protein>
    <recommendedName>
        <fullName>Anti-H(O) lectin 1</fullName>
    </recommendedName>
    <alternativeName>
        <fullName>Anti-H(O) lectin I</fullName>
    </alternativeName>
    <alternativeName>
        <fullName>CSA-I</fullName>
    </alternativeName>
</protein>
<sequence>LNDHLSFNFDKFVPNQNNILFQGEASVSTTGVLQVTKVSKPATRSIGRALYAAPVHIWDSTTGRVASFETSFSFVVKDEPEKSNGVDGLTFFLAPANSQIPSGSSAGLFGLFNSSDNKSSNQIIAVEFDTYFGKTYNPWDPDFKHIGVDVNSIKSIKTVKWDWRNGEVANVVITYRAPTKSLTVSLSYPSDQTSNIVTASVDLKAILPEWVSVGFSAGVGNAAEFETHDVLSWYFTSNLEANPA</sequence>
<proteinExistence type="evidence at protein level"/>
<feature type="chain" id="PRO_0000105094" description="Anti-H(O) lectin 1">
    <location>
        <begin position="1"/>
        <end position="244"/>
    </location>
</feature>
<feature type="binding site" evidence="1">
    <location>
        <position position="127"/>
    </location>
    <ligand>
        <name>Mn(2+)</name>
        <dbReference type="ChEBI" id="CHEBI:29035"/>
    </ligand>
</feature>
<feature type="binding site" evidence="1">
    <location>
        <position position="129"/>
    </location>
    <ligand>
        <name>Ca(2+)</name>
        <dbReference type="ChEBI" id="CHEBI:29108"/>
    </ligand>
</feature>
<feature type="binding site" evidence="1">
    <location>
        <position position="129"/>
    </location>
    <ligand>
        <name>Mn(2+)</name>
        <dbReference type="ChEBI" id="CHEBI:29035"/>
    </ligand>
</feature>
<feature type="binding site" evidence="1">
    <location>
        <position position="131"/>
    </location>
    <ligand>
        <name>Ca(2+)</name>
        <dbReference type="ChEBI" id="CHEBI:29108"/>
    </ligand>
</feature>
<feature type="binding site" evidence="1">
    <location>
        <position position="137"/>
    </location>
    <ligand>
        <name>Ca(2+)</name>
        <dbReference type="ChEBI" id="CHEBI:29108"/>
    </ligand>
</feature>
<feature type="binding site" evidence="1">
    <location>
        <position position="142"/>
    </location>
    <ligand>
        <name>Ca(2+)</name>
        <dbReference type="ChEBI" id="CHEBI:29108"/>
    </ligand>
</feature>
<feature type="binding site" evidence="1">
    <location>
        <position position="142"/>
    </location>
    <ligand>
        <name>Mn(2+)</name>
        <dbReference type="ChEBI" id="CHEBI:29035"/>
    </ligand>
</feature>
<feature type="binding site" evidence="1">
    <location>
        <position position="145"/>
    </location>
    <ligand>
        <name>Mn(2+)</name>
        <dbReference type="ChEBI" id="CHEBI:29035"/>
    </ligand>
</feature>
<feature type="glycosylation site" description="N-linked (GlcNAc...) asparagine" evidence="2">
    <location>
        <position position="113"/>
    </location>
</feature>
<feature type="glycosylation site" description="N-linked (GlcNAc...) asparagine" evidence="2">
    <location>
        <position position="117"/>
    </location>
</feature>
<feature type="sequence conflict" description="In Ref. 2; AA sequence." evidence="3" ref="2">
    <original>H</original>
    <variation>K</variation>
    <location>
        <position position="4"/>
    </location>
</feature>
<feature type="sequence conflict" description="In Ref. 2; AA sequence." evidence="3" ref="2">
    <original>E</original>
    <variation>A</variation>
    <location>
        <position position="24"/>
    </location>
</feature>
<feature type="sequence conflict" description="In Ref. 2; AA sequence." evidence="3" ref="2">
    <original>T</original>
    <variation>K</variation>
    <location>
        <position position="30"/>
    </location>
</feature>
<name>LEC1_CYTSE</name>
<comment type="function">
    <text>Di-N-acetylchitobiose-binding anti-H(O) lectin.</text>
</comment>
<comment type="subunit">
    <text>Homotetramer.</text>
</comment>
<comment type="domain">
    <text>The peptide 129-Asp--Trp-139 is responsible for the carbohydrate binding.</text>
</comment>
<comment type="similarity">
    <text evidence="3">Belongs to the leguminous lectin family.</text>
</comment>
<accession>P22970</accession>